<feature type="chain" id="PRO_0000150498" description="Olfactory receptor 2T3">
    <location>
        <begin position="1"/>
        <end position="318"/>
    </location>
</feature>
<feature type="topological domain" description="Extracellular" evidence="1">
    <location>
        <begin position="1"/>
        <end position="30"/>
    </location>
</feature>
<feature type="transmembrane region" description="Helical; Name=1" evidence="1">
    <location>
        <begin position="31"/>
        <end position="54"/>
    </location>
</feature>
<feature type="topological domain" description="Cytoplasmic" evidence="1">
    <location>
        <begin position="55"/>
        <end position="62"/>
    </location>
</feature>
<feature type="transmembrane region" description="Helical; Name=2" evidence="1">
    <location>
        <begin position="63"/>
        <end position="84"/>
    </location>
</feature>
<feature type="topological domain" description="Extracellular" evidence="1">
    <location>
        <begin position="85"/>
        <end position="105"/>
    </location>
</feature>
<feature type="transmembrane region" description="Helical; Name=3" evidence="1">
    <location>
        <begin position="106"/>
        <end position="125"/>
    </location>
</feature>
<feature type="topological domain" description="Cytoplasmic" evidence="1">
    <location>
        <begin position="126"/>
        <end position="144"/>
    </location>
</feature>
<feature type="transmembrane region" description="Helical; Name=4" evidence="1">
    <location>
        <begin position="145"/>
        <end position="163"/>
    </location>
</feature>
<feature type="topological domain" description="Extracellular" evidence="1">
    <location>
        <begin position="164"/>
        <end position="200"/>
    </location>
</feature>
<feature type="transmembrane region" description="Helical; Name=5" evidence="1">
    <location>
        <begin position="201"/>
        <end position="224"/>
    </location>
</feature>
<feature type="topological domain" description="Cytoplasmic" evidence="1">
    <location>
        <begin position="225"/>
        <end position="241"/>
    </location>
</feature>
<feature type="transmembrane region" description="Helical; Name=6" evidence="1">
    <location>
        <begin position="242"/>
        <end position="264"/>
    </location>
</feature>
<feature type="topological domain" description="Extracellular" evidence="1">
    <location>
        <begin position="265"/>
        <end position="277"/>
    </location>
</feature>
<feature type="transmembrane region" description="Helical; Name=7" evidence="1">
    <location>
        <begin position="278"/>
        <end position="297"/>
    </location>
</feature>
<feature type="topological domain" description="Cytoplasmic" evidence="1">
    <location>
        <begin position="298"/>
        <end position="318"/>
    </location>
</feature>
<feature type="glycosylation site" description="N-linked (GlcNAc...) asparagine" evidence="1">
    <location>
        <position position="5"/>
    </location>
</feature>
<feature type="glycosylation site" description="N-linked (GlcNAc...) asparagine" evidence="1">
    <location>
        <position position="10"/>
    </location>
</feature>
<feature type="disulfide bond" evidence="2">
    <location>
        <begin position="102"/>
        <end position="194"/>
    </location>
</feature>
<feature type="sequence variant" id="VAR_053151" description="In dbSNP:rs1770110.">
    <original>M</original>
    <variation>T</variation>
    <location>
        <position position="204"/>
    </location>
</feature>
<feature type="sequence conflict" description="In Ref. 3; BAC05839." evidence="3" ref="3">
    <original>L</original>
    <variation>M</variation>
    <location>
        <position position="306"/>
    </location>
</feature>
<name>OR2T3_HUMAN</name>
<protein>
    <recommendedName>
        <fullName>Olfactory receptor 2T3</fullName>
    </recommendedName>
</protein>
<evidence type="ECO:0000255" key="1"/>
<evidence type="ECO:0000255" key="2">
    <source>
        <dbReference type="PROSITE-ProRule" id="PRU00521"/>
    </source>
</evidence>
<evidence type="ECO:0000305" key="3"/>
<gene>
    <name type="primary">OR2T3</name>
</gene>
<organism>
    <name type="scientific">Homo sapiens</name>
    <name type="common">Human</name>
    <dbReference type="NCBI Taxonomy" id="9606"/>
    <lineage>
        <taxon>Eukaryota</taxon>
        <taxon>Metazoa</taxon>
        <taxon>Chordata</taxon>
        <taxon>Craniata</taxon>
        <taxon>Vertebrata</taxon>
        <taxon>Euteleostomi</taxon>
        <taxon>Mammalia</taxon>
        <taxon>Eutheria</taxon>
        <taxon>Euarchontoglires</taxon>
        <taxon>Primates</taxon>
        <taxon>Haplorrhini</taxon>
        <taxon>Catarrhini</taxon>
        <taxon>Hominidae</taxon>
        <taxon>Homo</taxon>
    </lineage>
</organism>
<accession>Q8NH03</accession>
<accession>B2RNJ1</accession>
<keyword id="KW-1003">Cell membrane</keyword>
<keyword id="KW-1015">Disulfide bond</keyword>
<keyword id="KW-0297">G-protein coupled receptor</keyword>
<keyword id="KW-0325">Glycoprotein</keyword>
<keyword id="KW-0472">Membrane</keyword>
<keyword id="KW-0552">Olfaction</keyword>
<keyword id="KW-0675">Receptor</keyword>
<keyword id="KW-1185">Reference proteome</keyword>
<keyword id="KW-0716">Sensory transduction</keyword>
<keyword id="KW-0807">Transducer</keyword>
<keyword id="KW-0812">Transmembrane</keyword>
<keyword id="KW-1133">Transmembrane helix</keyword>
<dbReference type="EMBL" id="AC138089">
    <property type="status" value="NOT_ANNOTATED_CDS"/>
    <property type="molecule type" value="Genomic_DNA"/>
</dbReference>
<dbReference type="EMBL" id="BC136915">
    <property type="protein sequence ID" value="AAI36916.1"/>
    <property type="molecule type" value="mRNA"/>
</dbReference>
<dbReference type="EMBL" id="BC136916">
    <property type="protein sequence ID" value="AAI36917.1"/>
    <property type="molecule type" value="mRNA"/>
</dbReference>
<dbReference type="EMBL" id="AB065612">
    <property type="protein sequence ID" value="BAC05839.1"/>
    <property type="molecule type" value="Genomic_DNA"/>
</dbReference>
<dbReference type="CCDS" id="CCDS31117.1"/>
<dbReference type="RefSeq" id="NP_001005495.1">
    <property type="nucleotide sequence ID" value="NM_001005495.1"/>
</dbReference>
<dbReference type="SMR" id="Q8NH03"/>
<dbReference type="FunCoup" id="Q8NH03">
    <property type="interactions" value="487"/>
</dbReference>
<dbReference type="STRING" id="9606.ENSP00000352604"/>
<dbReference type="GlyCosmos" id="Q8NH03">
    <property type="glycosylation" value="2 sites, No reported glycans"/>
</dbReference>
<dbReference type="GlyGen" id="Q8NH03">
    <property type="glycosylation" value="2 sites"/>
</dbReference>
<dbReference type="BioMuta" id="OR2T3"/>
<dbReference type="DMDM" id="85541045"/>
<dbReference type="MassIVE" id="Q8NH03"/>
<dbReference type="PaxDb" id="9606-ENSP00000352604"/>
<dbReference type="PeptideAtlas" id="Q8NH03"/>
<dbReference type="Antibodypedia" id="57441">
    <property type="antibodies" value="72 antibodies from 17 providers"/>
</dbReference>
<dbReference type="DNASU" id="343173"/>
<dbReference type="Ensembl" id="ENST00000359594.3">
    <property type="protein sequence ID" value="ENSP00000352604.2"/>
    <property type="gene ID" value="ENSG00000196539.3"/>
</dbReference>
<dbReference type="Ensembl" id="ENST00000610467.2">
    <property type="protein sequence ID" value="ENSP00000478611.1"/>
    <property type="gene ID" value="ENSG00000277113.2"/>
</dbReference>
<dbReference type="Ensembl" id="ENST00000614898.1">
    <property type="protein sequence ID" value="ENSP00000480124.1"/>
    <property type="gene ID" value="ENSG00000278377.1"/>
</dbReference>
<dbReference type="Ensembl" id="ENST00000709561.1">
    <property type="protein sequence ID" value="ENSP00000517763.1"/>
    <property type="gene ID" value="ENSG00000292005.1"/>
</dbReference>
<dbReference type="GeneID" id="343173"/>
<dbReference type="KEGG" id="hsa:343173"/>
<dbReference type="MANE-Select" id="ENST00000359594.3">
    <property type="protein sequence ID" value="ENSP00000352604.2"/>
    <property type="RefSeq nucleotide sequence ID" value="NM_001005495.1"/>
    <property type="RefSeq protein sequence ID" value="NP_001005495.1"/>
</dbReference>
<dbReference type="UCSC" id="uc001iel.1">
    <property type="organism name" value="human"/>
</dbReference>
<dbReference type="AGR" id="HGNC:14727"/>
<dbReference type="CTD" id="343173"/>
<dbReference type="GeneCards" id="OR2T3"/>
<dbReference type="HGNC" id="HGNC:14727">
    <property type="gene designation" value="OR2T3"/>
</dbReference>
<dbReference type="HPA" id="ENSG00000196539">
    <property type="expression patterns" value="Not detected"/>
</dbReference>
<dbReference type="neXtProt" id="NX_Q8NH03"/>
<dbReference type="OpenTargets" id="ENSG00000196539"/>
<dbReference type="PharmGKB" id="PA32203"/>
<dbReference type="VEuPathDB" id="HostDB:ENSG00000196539"/>
<dbReference type="eggNOG" id="ENOG502T92R">
    <property type="taxonomic scope" value="Eukaryota"/>
</dbReference>
<dbReference type="GeneTree" id="ENSGT01130000278260"/>
<dbReference type="HOGENOM" id="CLU_012526_1_2_1"/>
<dbReference type="InParanoid" id="Q8NH03"/>
<dbReference type="OMA" id="CSDICLY"/>
<dbReference type="OrthoDB" id="9626080at2759"/>
<dbReference type="PAN-GO" id="Q8NH03">
    <property type="GO annotations" value="0 GO annotations based on evolutionary models"/>
</dbReference>
<dbReference type="PhylomeDB" id="Q8NH03"/>
<dbReference type="TreeFam" id="TF337295"/>
<dbReference type="PathwayCommons" id="Q8NH03"/>
<dbReference type="Reactome" id="R-HSA-9752946">
    <property type="pathway name" value="Expression and translocation of olfactory receptors"/>
</dbReference>
<dbReference type="BioGRID-ORCS" id="343173">
    <property type="hits" value="238 hits in 637 CRISPR screens"/>
</dbReference>
<dbReference type="GenomeRNAi" id="343173"/>
<dbReference type="Pharos" id="Q8NH03">
    <property type="development level" value="Tdark"/>
</dbReference>
<dbReference type="PRO" id="PR:Q8NH03"/>
<dbReference type="Proteomes" id="UP000005640">
    <property type="component" value="Chromosome 1"/>
</dbReference>
<dbReference type="RNAct" id="Q8NH03">
    <property type="molecule type" value="protein"/>
</dbReference>
<dbReference type="Bgee" id="ENSG00000196539">
    <property type="expression patterns" value="Expressed in vermiform appendix and 4 other cell types or tissues"/>
</dbReference>
<dbReference type="ExpressionAtlas" id="Q8NH03">
    <property type="expression patterns" value="baseline"/>
</dbReference>
<dbReference type="GO" id="GO:0005886">
    <property type="term" value="C:plasma membrane"/>
    <property type="evidence" value="ECO:0000318"/>
    <property type="project" value="GO_Central"/>
</dbReference>
<dbReference type="GO" id="GO:0004930">
    <property type="term" value="F:G protein-coupled receptor activity"/>
    <property type="evidence" value="ECO:0007669"/>
    <property type="project" value="UniProtKB-KW"/>
</dbReference>
<dbReference type="GO" id="GO:0004984">
    <property type="term" value="F:olfactory receptor activity"/>
    <property type="evidence" value="ECO:0000318"/>
    <property type="project" value="GO_Central"/>
</dbReference>
<dbReference type="GO" id="GO:0050911">
    <property type="term" value="P:detection of chemical stimulus involved in sensory perception of smell"/>
    <property type="evidence" value="ECO:0000318"/>
    <property type="project" value="GO_Central"/>
</dbReference>
<dbReference type="CDD" id="cd15421">
    <property type="entry name" value="7tmA_OR2T-like"/>
    <property type="match status" value="1"/>
</dbReference>
<dbReference type="FunFam" id="1.20.1070.10:FF:000008">
    <property type="entry name" value="Olfactory receptor"/>
    <property type="match status" value="1"/>
</dbReference>
<dbReference type="Gene3D" id="1.20.1070.10">
    <property type="entry name" value="Rhodopsin 7-helix transmembrane proteins"/>
    <property type="match status" value="1"/>
</dbReference>
<dbReference type="InterPro" id="IPR000276">
    <property type="entry name" value="GPCR_Rhodpsn"/>
</dbReference>
<dbReference type="InterPro" id="IPR017452">
    <property type="entry name" value="GPCR_Rhodpsn_7TM"/>
</dbReference>
<dbReference type="InterPro" id="IPR000725">
    <property type="entry name" value="Olfact_rcpt"/>
</dbReference>
<dbReference type="PANTHER" id="PTHR26453">
    <property type="entry name" value="OLFACTORY RECEPTOR"/>
    <property type="match status" value="1"/>
</dbReference>
<dbReference type="Pfam" id="PF13853">
    <property type="entry name" value="7tm_4"/>
    <property type="match status" value="1"/>
</dbReference>
<dbReference type="PRINTS" id="PR00237">
    <property type="entry name" value="GPCRRHODOPSN"/>
</dbReference>
<dbReference type="PRINTS" id="PR00245">
    <property type="entry name" value="OLFACTORYR"/>
</dbReference>
<dbReference type="SMART" id="SM01381">
    <property type="entry name" value="7TM_GPCR_Srsx"/>
    <property type="match status" value="1"/>
</dbReference>
<dbReference type="SUPFAM" id="SSF81321">
    <property type="entry name" value="Family A G protein-coupled receptor-like"/>
    <property type="match status" value="1"/>
</dbReference>
<dbReference type="PROSITE" id="PS00237">
    <property type="entry name" value="G_PROTEIN_RECEP_F1_1"/>
    <property type="match status" value="1"/>
</dbReference>
<dbReference type="PROSITE" id="PS50262">
    <property type="entry name" value="G_PROTEIN_RECEP_F1_2"/>
    <property type="match status" value="1"/>
</dbReference>
<comment type="function">
    <text evidence="3">Odorant receptor.</text>
</comment>
<comment type="subcellular location">
    <subcellularLocation>
        <location>Cell membrane</location>
        <topology>Multi-pass membrane protein</topology>
    </subcellularLocation>
</comment>
<comment type="similarity">
    <text evidence="2">Belongs to the G-protein coupled receptor 1 family.</text>
</comment>
<comment type="online information" name="Human Olfactory Receptor Data Exploratorium (HORDE)">
    <link uri="http://genome.weizmann.ac.il/horde/card/index/symbol:OR2T3"/>
</comment>
<proteinExistence type="evidence at transcript level"/>
<reference key="1">
    <citation type="journal article" date="2006" name="Nature">
        <title>The DNA sequence and biological annotation of human chromosome 1.</title>
        <authorList>
            <person name="Gregory S.G."/>
            <person name="Barlow K.F."/>
            <person name="McLay K.E."/>
            <person name="Kaul R."/>
            <person name="Swarbreck D."/>
            <person name="Dunham A."/>
            <person name="Scott C.E."/>
            <person name="Howe K.L."/>
            <person name="Woodfine K."/>
            <person name="Spencer C.C.A."/>
            <person name="Jones M.C."/>
            <person name="Gillson C."/>
            <person name="Searle S."/>
            <person name="Zhou Y."/>
            <person name="Kokocinski F."/>
            <person name="McDonald L."/>
            <person name="Evans R."/>
            <person name="Phillips K."/>
            <person name="Atkinson A."/>
            <person name="Cooper R."/>
            <person name="Jones C."/>
            <person name="Hall R.E."/>
            <person name="Andrews T.D."/>
            <person name="Lloyd C."/>
            <person name="Ainscough R."/>
            <person name="Almeida J.P."/>
            <person name="Ambrose K.D."/>
            <person name="Anderson F."/>
            <person name="Andrew R.W."/>
            <person name="Ashwell R.I.S."/>
            <person name="Aubin K."/>
            <person name="Babbage A.K."/>
            <person name="Bagguley C.L."/>
            <person name="Bailey J."/>
            <person name="Beasley H."/>
            <person name="Bethel G."/>
            <person name="Bird C.P."/>
            <person name="Bray-Allen S."/>
            <person name="Brown J.Y."/>
            <person name="Brown A.J."/>
            <person name="Buckley D."/>
            <person name="Burton J."/>
            <person name="Bye J."/>
            <person name="Carder C."/>
            <person name="Chapman J.C."/>
            <person name="Clark S.Y."/>
            <person name="Clarke G."/>
            <person name="Clee C."/>
            <person name="Cobley V."/>
            <person name="Collier R.E."/>
            <person name="Corby N."/>
            <person name="Coville G.J."/>
            <person name="Davies J."/>
            <person name="Deadman R."/>
            <person name="Dunn M."/>
            <person name="Earthrowl M."/>
            <person name="Ellington A.G."/>
            <person name="Errington H."/>
            <person name="Frankish A."/>
            <person name="Frankland J."/>
            <person name="French L."/>
            <person name="Garner P."/>
            <person name="Garnett J."/>
            <person name="Gay L."/>
            <person name="Ghori M.R.J."/>
            <person name="Gibson R."/>
            <person name="Gilby L.M."/>
            <person name="Gillett W."/>
            <person name="Glithero R.J."/>
            <person name="Grafham D.V."/>
            <person name="Griffiths C."/>
            <person name="Griffiths-Jones S."/>
            <person name="Grocock R."/>
            <person name="Hammond S."/>
            <person name="Harrison E.S.I."/>
            <person name="Hart E."/>
            <person name="Haugen E."/>
            <person name="Heath P.D."/>
            <person name="Holmes S."/>
            <person name="Holt K."/>
            <person name="Howden P.J."/>
            <person name="Hunt A.R."/>
            <person name="Hunt S.E."/>
            <person name="Hunter G."/>
            <person name="Isherwood J."/>
            <person name="James R."/>
            <person name="Johnson C."/>
            <person name="Johnson D."/>
            <person name="Joy A."/>
            <person name="Kay M."/>
            <person name="Kershaw J.K."/>
            <person name="Kibukawa M."/>
            <person name="Kimberley A.M."/>
            <person name="King A."/>
            <person name="Knights A.J."/>
            <person name="Lad H."/>
            <person name="Laird G."/>
            <person name="Lawlor S."/>
            <person name="Leongamornlert D.A."/>
            <person name="Lloyd D.M."/>
            <person name="Loveland J."/>
            <person name="Lovell J."/>
            <person name="Lush M.J."/>
            <person name="Lyne R."/>
            <person name="Martin S."/>
            <person name="Mashreghi-Mohammadi M."/>
            <person name="Matthews L."/>
            <person name="Matthews N.S.W."/>
            <person name="McLaren S."/>
            <person name="Milne S."/>
            <person name="Mistry S."/>
            <person name="Moore M.J.F."/>
            <person name="Nickerson T."/>
            <person name="O'Dell C.N."/>
            <person name="Oliver K."/>
            <person name="Palmeiri A."/>
            <person name="Palmer S.A."/>
            <person name="Parker A."/>
            <person name="Patel D."/>
            <person name="Pearce A.V."/>
            <person name="Peck A.I."/>
            <person name="Pelan S."/>
            <person name="Phelps K."/>
            <person name="Phillimore B.J."/>
            <person name="Plumb R."/>
            <person name="Rajan J."/>
            <person name="Raymond C."/>
            <person name="Rouse G."/>
            <person name="Saenphimmachak C."/>
            <person name="Sehra H.K."/>
            <person name="Sheridan E."/>
            <person name="Shownkeen R."/>
            <person name="Sims S."/>
            <person name="Skuce C.D."/>
            <person name="Smith M."/>
            <person name="Steward C."/>
            <person name="Subramanian S."/>
            <person name="Sycamore N."/>
            <person name="Tracey A."/>
            <person name="Tromans A."/>
            <person name="Van Helmond Z."/>
            <person name="Wall M."/>
            <person name="Wallis J.M."/>
            <person name="White S."/>
            <person name="Whitehead S.L."/>
            <person name="Wilkinson J.E."/>
            <person name="Willey D.L."/>
            <person name="Williams H."/>
            <person name="Wilming L."/>
            <person name="Wray P.W."/>
            <person name="Wu Z."/>
            <person name="Coulson A."/>
            <person name="Vaudin M."/>
            <person name="Sulston J.E."/>
            <person name="Durbin R.M."/>
            <person name="Hubbard T."/>
            <person name="Wooster R."/>
            <person name="Dunham I."/>
            <person name="Carter N.P."/>
            <person name="McVean G."/>
            <person name="Ross M.T."/>
            <person name="Harrow J."/>
            <person name="Olson M.V."/>
            <person name="Beck S."/>
            <person name="Rogers J."/>
            <person name="Bentley D.R."/>
        </authorList>
    </citation>
    <scope>NUCLEOTIDE SEQUENCE [LARGE SCALE GENOMIC DNA]</scope>
</reference>
<reference key="2">
    <citation type="journal article" date="2004" name="Genome Res.">
        <title>The status, quality, and expansion of the NIH full-length cDNA project: the Mammalian Gene Collection (MGC).</title>
        <authorList>
            <consortium name="The MGC Project Team"/>
        </authorList>
    </citation>
    <scope>NUCLEOTIDE SEQUENCE [LARGE SCALE MRNA]</scope>
</reference>
<reference key="3">
    <citation type="submission" date="2001-07" db="EMBL/GenBank/DDBJ databases">
        <title>Genome-wide discovery and analysis of human seven transmembrane helix receptor genes.</title>
        <authorList>
            <person name="Suwa M."/>
            <person name="Sato T."/>
            <person name="Okouchi I."/>
            <person name="Arita M."/>
            <person name="Futami K."/>
            <person name="Matsumoto S."/>
            <person name="Tsutsumi S."/>
            <person name="Aburatani H."/>
            <person name="Asai K."/>
            <person name="Akiyama Y."/>
        </authorList>
    </citation>
    <scope>NUCLEOTIDE SEQUENCE [GENOMIC DNA] OF 1-313</scope>
</reference>
<sequence>MCSGNQTSQNQTASTDFTLTGLFAESKHAALLYTVTFLLFLMALTGNALLILLIHSEPRLHTPMYFFISQLALMDLMYLCVTVPKMLVGQVTGDDTISPSGCGIQMFFYLTLAGAEVFLLAAMAYDRYAAVCRPLHYPLLMNQRVCQLLVSACWVLGMVDGLLLTPITMSFPFCQSRKILSFFCETPALLKLSCSDVSLYKTLMYLCCILMLLAPIMVISSSYTLILHLIHRMNSAAGHRKALATCSSHMIIVLLLFGASFYTYMLPSSYHTAEQDMMVSAFYTIFTPVLNPLIYSLRNKDVTRALRSMMQSRMNQEK</sequence>